<reference key="1">
    <citation type="journal article" date="1998" name="Biochim. Biophys. Acta">
        <title>Molecular cloning and expression of human chondroitin 6-sulfotransferase.</title>
        <authorList>
            <person name="Fukuta M."/>
            <person name="Kobayashi Y."/>
            <person name="Uchimura K."/>
            <person name="Kimata K."/>
            <person name="Habuchi O."/>
        </authorList>
    </citation>
    <scope>NUCLEOTIDE SEQUENCE [MRNA]</scope>
    <scope>FUNCTION</scope>
    <scope>CATALYTIC ACTIVITY</scope>
    <scope>TISSUE SPECIFICITY</scope>
    <source>
        <tissue>Fetal brain</tissue>
    </source>
</reference>
<reference key="2">
    <citation type="journal article" date="1998" name="FEBS Lett.">
        <title>Functional expression and genomic structure of human chondroitin 6-sulfotransferase.</title>
        <authorList>
            <person name="Tsutsumi K."/>
            <person name="Shimakawa H."/>
            <person name="Kitagawa H."/>
            <person name="Sugahara K."/>
        </authorList>
    </citation>
    <scope>NUCLEOTIDE SEQUENCE [MRNA]</scope>
    <scope>FUNCTION</scope>
    <scope>CATALYTIC ACTIVITY</scope>
    <source>
        <tissue>Placenta</tissue>
    </source>
</reference>
<reference key="3">
    <citation type="journal article" date="2004" name="Genome Res.">
        <title>The status, quality, and expansion of the NIH full-length cDNA project: the Mammalian Gene Collection (MGC).</title>
        <authorList>
            <consortium name="The MGC Project Team"/>
        </authorList>
    </citation>
    <scope>NUCLEOTIDE SEQUENCE [LARGE SCALE MRNA]</scope>
    <scope>VARIANT GLN-357</scope>
    <source>
        <tissue>Liver</tissue>
    </source>
</reference>
<reference key="4">
    <citation type="journal article" date="2004" name="Proc. Natl. Acad. Sci. U.S.A.">
        <title>Loss of chondroitin 6-O-sulfotransferase-1 function results in severe human chondrodysplasia with progressive spinal involvement.</title>
        <authorList>
            <person name="Thiele H."/>
            <person name="Sakano M."/>
            <person name="Kitagawa H."/>
            <person name="Sugahara K."/>
            <person name="Rajab A."/>
            <person name="Hoehne W."/>
            <person name="Ritter H."/>
            <person name="Leschik G."/>
            <person name="Nuernberg P."/>
            <person name="Mundlos S."/>
        </authorList>
    </citation>
    <scope>VARIANT SEDCJD GLN-304</scope>
    <scope>CHARACTERIZATION OF VARIANT SEDCJD GLN-304</scope>
    <scope>FUNCTION</scope>
    <scope>CATALYTIC ACTIVITY</scope>
</reference>
<reference key="5">
    <citation type="journal article" date="2008" name="Am. J. Hum. Genet.">
        <title>Congenital joint dislocations caused by carbohydrate sulfotransferase 3 deficiency in recessive Larsen syndrome and humero-spinal dysostosis.</title>
        <authorList>
            <person name="Hermanns P."/>
            <person name="Unger S."/>
            <person name="Rossi A."/>
            <person name="Perez-Aytes A."/>
            <person name="Cortina H."/>
            <person name="Bonafe L."/>
            <person name="Boccone L."/>
            <person name="Setzu V."/>
            <person name="Dutoit M."/>
            <person name="Sangiorgi L."/>
            <person name="Pecora F."/>
            <person name="Reicherter K."/>
            <person name="Nishimura G."/>
            <person name="Spranger J."/>
            <person name="Zabel B."/>
            <person name="Superti-Furga A."/>
        </authorList>
    </citation>
    <scope>VARIANTS SEDCJD TRP-222; PRO-259; PRO-307 AND LYS-372</scope>
    <scope>VARIANT GLN-357</scope>
    <scope>CHARACTERIZATION OF VARIANTS SEDCJD TRP-222 AND PRO-259</scope>
</reference>
<reference key="6">
    <citation type="journal article" date="2008" name="Am. J. Hum. Genet.">
        <authorList>
            <person name="Hermanns P."/>
            <person name="Unger S."/>
            <person name="Rossi A."/>
            <person name="Perez-Aytes A."/>
            <person name="Cortina H."/>
            <person name="Bonafe L."/>
            <person name="Boccone L."/>
            <person name="Setzu V."/>
            <person name="Dutoit M."/>
            <person name="Sangiorgi L."/>
            <person name="Pecora F."/>
            <person name="Reicherter K."/>
            <person name="Nishimura G."/>
            <person name="Spranger J."/>
            <person name="Zabel B."/>
            <person name="Superti-Furga A."/>
        </authorList>
    </citation>
    <scope>ERRATUM OF PUBMED:18513679</scope>
</reference>
<gene>
    <name type="primary">CHST3</name>
</gene>
<evidence type="ECO:0000250" key="1"/>
<evidence type="ECO:0000250" key="2">
    <source>
        <dbReference type="UniProtKB" id="O88199"/>
    </source>
</evidence>
<evidence type="ECO:0000250" key="3">
    <source>
        <dbReference type="UniProtKB" id="Q92179"/>
    </source>
</evidence>
<evidence type="ECO:0000255" key="4"/>
<evidence type="ECO:0000256" key="5">
    <source>
        <dbReference type="SAM" id="MobiDB-lite"/>
    </source>
</evidence>
<evidence type="ECO:0000269" key="6">
    <source>
    </source>
</evidence>
<evidence type="ECO:0000269" key="7">
    <source>
    </source>
</evidence>
<evidence type="ECO:0000269" key="8">
    <source>
    </source>
</evidence>
<evidence type="ECO:0000269" key="9">
    <source>
    </source>
</evidence>
<evidence type="ECO:0000269" key="10">
    <source>
    </source>
</evidence>
<evidence type="ECO:0000303" key="11">
    <source>
    </source>
</evidence>
<evidence type="ECO:0000305" key="12"/>
<evidence type="ECO:0000305" key="13">
    <source>
    </source>
</evidence>
<dbReference type="EC" id="2.8.2.17" evidence="6 9 10"/>
<dbReference type="EC" id="2.8.2.21" evidence="9"/>
<dbReference type="EMBL" id="AB012192">
    <property type="protein sequence ID" value="BAA32576.1"/>
    <property type="molecule type" value="mRNA"/>
</dbReference>
<dbReference type="EMBL" id="AB017915">
    <property type="protein sequence ID" value="BAA36348.1"/>
    <property type="molecule type" value="mRNA"/>
</dbReference>
<dbReference type="EMBL" id="BC093690">
    <property type="protein sequence ID" value="AAH93690.1"/>
    <property type="molecule type" value="mRNA"/>
</dbReference>
<dbReference type="EMBL" id="BC104856">
    <property type="protein sequence ID" value="AAI04857.1"/>
    <property type="molecule type" value="mRNA"/>
</dbReference>
<dbReference type="CCDS" id="CCDS7312.1"/>
<dbReference type="RefSeq" id="NP_004264.2">
    <property type="nucleotide sequence ID" value="NM_004273.4"/>
</dbReference>
<dbReference type="RefSeq" id="XP_006718138.1">
    <property type="nucleotide sequence ID" value="XM_006718075.5"/>
</dbReference>
<dbReference type="RefSeq" id="XP_011538671.1">
    <property type="nucleotide sequence ID" value="XM_011540369.3"/>
</dbReference>
<dbReference type="RefSeq" id="XP_047281978.1">
    <property type="nucleotide sequence ID" value="XM_047426022.1"/>
</dbReference>
<dbReference type="RefSeq" id="XP_054223177.1">
    <property type="nucleotide sequence ID" value="XM_054367202.1"/>
</dbReference>
<dbReference type="RefSeq" id="XP_054223178.1">
    <property type="nucleotide sequence ID" value="XM_054367203.1"/>
</dbReference>
<dbReference type="RefSeq" id="XP_054223179.1">
    <property type="nucleotide sequence ID" value="XM_054367204.1"/>
</dbReference>
<dbReference type="BioGRID" id="114855">
    <property type="interactions" value="17"/>
</dbReference>
<dbReference type="FunCoup" id="Q7LGC8">
    <property type="interactions" value="566"/>
</dbReference>
<dbReference type="IntAct" id="Q7LGC8">
    <property type="interactions" value="10"/>
</dbReference>
<dbReference type="STRING" id="9606.ENSP00000362207"/>
<dbReference type="GlyCosmos" id="Q7LGC8">
    <property type="glycosylation" value="6 sites, No reported glycans"/>
</dbReference>
<dbReference type="GlyGen" id="Q7LGC8">
    <property type="glycosylation" value="6 sites, 4 N-linked glycans (3 sites)"/>
</dbReference>
<dbReference type="iPTMnet" id="Q7LGC8"/>
<dbReference type="PhosphoSitePlus" id="Q7LGC8"/>
<dbReference type="SwissPalm" id="Q7LGC8"/>
<dbReference type="BioMuta" id="CHST3"/>
<dbReference type="DMDM" id="116241297"/>
<dbReference type="CPTAC" id="CPTAC-1483"/>
<dbReference type="jPOST" id="Q7LGC8"/>
<dbReference type="MassIVE" id="Q7LGC8"/>
<dbReference type="PaxDb" id="9606-ENSP00000362207"/>
<dbReference type="PeptideAtlas" id="Q7LGC8"/>
<dbReference type="ProteomicsDB" id="68868"/>
<dbReference type="Pumba" id="Q7LGC8"/>
<dbReference type="Antibodypedia" id="29214">
    <property type="antibodies" value="178 antibodies from 29 providers"/>
</dbReference>
<dbReference type="DNASU" id="9469"/>
<dbReference type="Ensembl" id="ENST00000373115.5">
    <property type="protein sequence ID" value="ENSP00000362207.4"/>
    <property type="gene ID" value="ENSG00000122863.6"/>
</dbReference>
<dbReference type="GeneID" id="9469"/>
<dbReference type="KEGG" id="hsa:9469"/>
<dbReference type="MANE-Select" id="ENST00000373115.5">
    <property type="protein sequence ID" value="ENSP00000362207.4"/>
    <property type="RefSeq nucleotide sequence ID" value="NM_004273.5"/>
    <property type="RefSeq protein sequence ID" value="NP_004264.2"/>
</dbReference>
<dbReference type="UCSC" id="uc001jsn.4">
    <property type="organism name" value="human"/>
</dbReference>
<dbReference type="AGR" id="HGNC:1971"/>
<dbReference type="CTD" id="9469"/>
<dbReference type="DisGeNET" id="9469"/>
<dbReference type="GeneCards" id="CHST3"/>
<dbReference type="GeneReviews" id="CHST3"/>
<dbReference type="HGNC" id="HGNC:1971">
    <property type="gene designation" value="CHST3"/>
</dbReference>
<dbReference type="HPA" id="ENSG00000122863">
    <property type="expression patterns" value="Low tissue specificity"/>
</dbReference>
<dbReference type="MalaCards" id="CHST3"/>
<dbReference type="MIM" id="143095">
    <property type="type" value="phenotype"/>
</dbReference>
<dbReference type="MIM" id="603799">
    <property type="type" value="gene"/>
</dbReference>
<dbReference type="neXtProt" id="NX_Q7LGC8"/>
<dbReference type="OpenTargets" id="ENSG00000122863"/>
<dbReference type="Orphanet" id="263463">
    <property type="disease" value="CHST3-related skeletal dysplasia"/>
</dbReference>
<dbReference type="PharmGKB" id="PA26503"/>
<dbReference type="VEuPathDB" id="HostDB:ENSG00000122863"/>
<dbReference type="eggNOG" id="ENOG502QWEX">
    <property type="taxonomic scope" value="Eukaryota"/>
</dbReference>
<dbReference type="GeneTree" id="ENSGT00940000161045"/>
<dbReference type="HOGENOM" id="CLU_028381_3_2_1"/>
<dbReference type="InParanoid" id="Q7LGC8"/>
<dbReference type="OMA" id="KWRFGMP"/>
<dbReference type="OrthoDB" id="6138663at2759"/>
<dbReference type="PAN-GO" id="Q7LGC8">
    <property type="GO annotations" value="5 GO annotations based on evolutionary models"/>
</dbReference>
<dbReference type="PhylomeDB" id="Q7LGC8"/>
<dbReference type="TreeFam" id="TF342871"/>
<dbReference type="BioCyc" id="MetaCyc:HS04610-MONOMER"/>
<dbReference type="BRENDA" id="2.8.2.17">
    <property type="organism ID" value="2681"/>
</dbReference>
<dbReference type="PathwayCommons" id="Q7LGC8"/>
<dbReference type="Reactome" id="R-HSA-2022870">
    <property type="pathway name" value="Chondroitin sulfate biosynthesis"/>
</dbReference>
<dbReference type="Reactome" id="R-HSA-3595172">
    <property type="pathway name" value="Defective CHST3 causes SEDCJD"/>
</dbReference>
<dbReference type="SignaLink" id="Q7LGC8"/>
<dbReference type="BioGRID-ORCS" id="9469">
    <property type="hits" value="17 hits in 1148 CRISPR screens"/>
</dbReference>
<dbReference type="ChiTaRS" id="CHST3">
    <property type="organism name" value="human"/>
</dbReference>
<dbReference type="GenomeRNAi" id="9469"/>
<dbReference type="Pharos" id="Q7LGC8">
    <property type="development level" value="Tbio"/>
</dbReference>
<dbReference type="PRO" id="PR:Q7LGC8"/>
<dbReference type="Proteomes" id="UP000005640">
    <property type="component" value="Chromosome 10"/>
</dbReference>
<dbReference type="RNAct" id="Q7LGC8">
    <property type="molecule type" value="protein"/>
</dbReference>
<dbReference type="Bgee" id="ENSG00000122863">
    <property type="expression patterns" value="Expressed in tibia and 160 other cell types or tissues"/>
</dbReference>
<dbReference type="GO" id="GO:0000139">
    <property type="term" value="C:Golgi membrane"/>
    <property type="evidence" value="ECO:0000304"/>
    <property type="project" value="Reactome"/>
</dbReference>
<dbReference type="GO" id="GO:0008459">
    <property type="term" value="F:chondroitin 6-sulfotransferase activity"/>
    <property type="evidence" value="ECO:0000314"/>
    <property type="project" value="UniProtKB"/>
</dbReference>
<dbReference type="GO" id="GO:0001517">
    <property type="term" value="F:N-acetylglucosamine 6-O-sulfotransferase activity"/>
    <property type="evidence" value="ECO:0000318"/>
    <property type="project" value="GO_Central"/>
</dbReference>
<dbReference type="GO" id="GO:0005975">
    <property type="term" value="P:carbohydrate metabolic process"/>
    <property type="evidence" value="ECO:0007669"/>
    <property type="project" value="InterPro"/>
</dbReference>
<dbReference type="GO" id="GO:0050650">
    <property type="term" value="P:chondroitin sulfate proteoglycan biosynthetic process"/>
    <property type="evidence" value="ECO:0000314"/>
    <property type="project" value="UniProtKB"/>
</dbReference>
<dbReference type="GO" id="GO:0006044">
    <property type="term" value="P:N-acetylglucosamine metabolic process"/>
    <property type="evidence" value="ECO:0000318"/>
    <property type="project" value="GO_Central"/>
</dbReference>
<dbReference type="GO" id="GO:0006790">
    <property type="term" value="P:sulfur compound metabolic process"/>
    <property type="evidence" value="ECO:0000314"/>
    <property type="project" value="UniProtKB"/>
</dbReference>
<dbReference type="GO" id="GO:0043029">
    <property type="term" value="P:T cell homeostasis"/>
    <property type="evidence" value="ECO:0007669"/>
    <property type="project" value="Ensembl"/>
</dbReference>
<dbReference type="FunFam" id="3.40.50.300:FF:000938">
    <property type="entry name" value="Sulfotransferase"/>
    <property type="match status" value="1"/>
</dbReference>
<dbReference type="Gene3D" id="3.40.50.300">
    <property type="entry name" value="P-loop containing nucleotide triphosphate hydrolases"/>
    <property type="match status" value="1"/>
</dbReference>
<dbReference type="InterPro" id="IPR016469">
    <property type="entry name" value="Carbohydrate_sulfotransferase"/>
</dbReference>
<dbReference type="InterPro" id="IPR051135">
    <property type="entry name" value="Gal/GlcNAc/GalNAc_ST"/>
</dbReference>
<dbReference type="InterPro" id="IPR027417">
    <property type="entry name" value="P-loop_NTPase"/>
</dbReference>
<dbReference type="InterPro" id="IPR000863">
    <property type="entry name" value="Sulfotransferase_dom"/>
</dbReference>
<dbReference type="PANTHER" id="PTHR10704">
    <property type="entry name" value="CARBOHYDRATE SULFOTRANSFERASE"/>
    <property type="match status" value="1"/>
</dbReference>
<dbReference type="PANTHER" id="PTHR10704:SF60">
    <property type="entry name" value="CARBOHYDRATE SULFOTRANSFERASE 3"/>
    <property type="match status" value="1"/>
</dbReference>
<dbReference type="Pfam" id="PF00685">
    <property type="entry name" value="Sulfotransfer_1"/>
    <property type="match status" value="1"/>
</dbReference>
<dbReference type="PIRSF" id="PIRSF005883">
    <property type="entry name" value="Carbohydrate_sulfotransferase"/>
    <property type="match status" value="1"/>
</dbReference>
<dbReference type="SUPFAM" id="SSF52540">
    <property type="entry name" value="P-loop containing nucleoside triphosphate hydrolases"/>
    <property type="match status" value="1"/>
</dbReference>
<sequence>MEKGLTLPQDCRDFVHSLKMRSKYALFLVFVVIVFVFIEKENKIISRVSDKLKQIPQALADANSTDPALILAENASLLSLSELDSAFSQLQSRLRNLSLQLGVEPAMEAAGEEEEEQRKEEEPPRPAVAGPRRHVLLMATTRTGSSFVGEFFNQQGNIFYLFEPLWHIERTVSFEPGGANAAGSALVYRDVLKQLFLCDLYVLEHFITPLPEDHLTQFMFRRGSSRSLCEDPVCTPFVKKVFEKYHCKNRRCGPLNVTLAAEACRRKEHMALKAVRIRQLEFLQPLAEDPRLDLRVIQLVRDPRAVLASRMVAFAGKYKTWKKWLDDEGQDGLREEEVQRLRGNCESIRLSAELGLRQPAWLRGRYMLVRYEDVARGPLQKAREMYRFAGIPLTPQVEDWIQKNTQAAHDGSGIYSTQKNSSEQFEKWRFSMPFKLAQVVQAACGPAMRLFGYKLARDAAALTNRSVSLLEERGTFWVT</sequence>
<organism>
    <name type="scientific">Homo sapiens</name>
    <name type="common">Human</name>
    <dbReference type="NCBI Taxonomy" id="9606"/>
    <lineage>
        <taxon>Eukaryota</taxon>
        <taxon>Metazoa</taxon>
        <taxon>Chordata</taxon>
        <taxon>Craniata</taxon>
        <taxon>Vertebrata</taxon>
        <taxon>Euteleostomi</taxon>
        <taxon>Mammalia</taxon>
        <taxon>Eutheria</taxon>
        <taxon>Euarchontoglires</taxon>
        <taxon>Primates</taxon>
        <taxon>Haplorrhini</taxon>
        <taxon>Catarrhini</taxon>
        <taxon>Hominidae</taxon>
        <taxon>Homo</taxon>
    </lineage>
</organism>
<name>CHST3_HUMAN</name>
<feature type="chain" id="PRO_0000085188" description="Carbohydrate sulfotransferase 3">
    <location>
        <begin position="1"/>
        <end position="479"/>
    </location>
</feature>
<feature type="topological domain" description="Cytoplasmic" evidence="4">
    <location>
        <begin position="1"/>
        <end position="20"/>
    </location>
</feature>
<feature type="transmembrane region" description="Helical; Signal-anchor for type II membrane protein" evidence="4">
    <location>
        <begin position="21"/>
        <end position="38"/>
    </location>
</feature>
<feature type="topological domain" description="Lumenal" evidence="4">
    <location>
        <begin position="39"/>
        <end position="479"/>
    </location>
</feature>
<feature type="region of interest" description="Disordered" evidence="5">
    <location>
        <begin position="108"/>
        <end position="128"/>
    </location>
</feature>
<feature type="binding site" evidence="1">
    <location>
        <begin position="141"/>
        <end position="147"/>
    </location>
    <ligand>
        <name>3'-phosphoadenylyl sulfate</name>
        <dbReference type="ChEBI" id="CHEBI:58339"/>
    </ligand>
</feature>
<feature type="binding site" evidence="1">
    <location>
        <begin position="301"/>
        <end position="309"/>
    </location>
    <ligand>
        <name>3'-phosphoadenylyl sulfate</name>
        <dbReference type="ChEBI" id="CHEBI:58339"/>
    </ligand>
</feature>
<feature type="glycosylation site" description="N-linked (GlcNAc...) asparagine" evidence="4">
    <location>
        <position position="63"/>
    </location>
</feature>
<feature type="glycosylation site" description="N-linked (GlcNAc...) asparagine" evidence="4">
    <location>
        <position position="74"/>
    </location>
</feature>
<feature type="glycosylation site" description="N-linked (GlcNAc...) asparagine" evidence="4">
    <location>
        <position position="96"/>
    </location>
</feature>
<feature type="glycosylation site" description="N-linked (GlcNAc...) asparagine" evidence="4">
    <location>
        <position position="256"/>
    </location>
</feature>
<feature type="glycosylation site" description="N-linked (GlcNAc...) asparagine" evidence="4">
    <location>
        <position position="420"/>
    </location>
</feature>
<feature type="glycosylation site" description="N-linked (GlcNAc...) asparagine" evidence="4">
    <location>
        <position position="464"/>
    </location>
</feature>
<feature type="sequence variant" id="VAR_047856" description="In SEDCJD; decreased chondroitin sulfate biosynthetic process; dbSNP:rs121908617." evidence="8">
    <original>R</original>
    <variation>W</variation>
    <location>
        <position position="222"/>
    </location>
</feature>
<feature type="sequence variant" id="VAR_047857" description="In SEDCJD; decreased chondroitin sulfate biosynthetic process; dbSNP:rs121908616." evidence="8">
    <original>L</original>
    <variation>P</variation>
    <location>
        <position position="259"/>
    </location>
</feature>
<feature type="sequence variant" id="VAR_021413" description="In SEDCJD; loss of chondroitin 6-sulfotransferase activity; dbSNP:rs28937593." evidence="6">
    <original>R</original>
    <variation>Q</variation>
    <location>
        <position position="304"/>
    </location>
</feature>
<feature type="sequence variant" id="VAR_047858" description="In SEDCJD; dbSNP:rs121908618." evidence="8">
    <original>L</original>
    <variation>P</variation>
    <location>
        <position position="307"/>
    </location>
</feature>
<feature type="sequence variant" id="VAR_021414" description="In dbSNP:rs3740128.">
    <original>I</original>
    <variation>M</variation>
    <location>
        <position position="348"/>
    </location>
</feature>
<feature type="sequence variant" id="VAR_021415" description="In dbSNP:rs3740129." evidence="7 8">
    <original>R</original>
    <variation>Q</variation>
    <location>
        <position position="357"/>
    </location>
</feature>
<feature type="sequence variant" id="VAR_047859" description="In SEDCJD; dbSNP:rs267606734." evidence="8">
    <original>E</original>
    <variation>K</variation>
    <location>
        <position position="372"/>
    </location>
</feature>
<feature type="sequence conflict" description="In Ref. 1; BAA32576." evidence="12" ref="1">
    <original>R</original>
    <variation>P</variation>
    <location>
        <position position="387"/>
    </location>
</feature>
<feature type="sequence conflict" description="In Ref. 1; BAA32576." evidence="12" ref="1">
    <original>A</original>
    <variation>P</variation>
    <location>
        <position position="443"/>
    </location>
</feature>
<comment type="function">
    <text evidence="2 3 6 9 10 11">Sulfotransferase that utilizes 3'-phospho-5'-adenylyl sulfate (PAPS) as sulfonate donor to catalyze the transfer of sulfate to position 6 of the N-acetylgalactosamine (GalNAc) residue of chondroitin (PubMed:15215498, PubMed:9714738, PubMed:9883891). Chondroitin sulfate constitutes the predominant proteoglycan present in cartilage and is distributed on the surfaces of many cells and extracellular matrices (PubMed:9714738). Catalyzes with a lower efficiency the sulfation of Gal residues of keratan sulfate, another glycosaminoglycan (PubMed:9714738). Can also catalyze the sulfation of the Gal residues in sialyl N-acetyllactosamine (sialyl LacNAc) oligosaccharides (By similarity). May play a role in the maintenance of naive T-lymphocytes in the spleen (By similarity).</text>
</comment>
<comment type="catalytic activity">
    <reaction evidence="6 9 10">
        <text>chondroitin beta-D-glucuronate + n 3'-phosphoadenylyl sulfate = chondroitin 6'-sulfate + n adenosine 3',5'-bisphosphate + n H(+)</text>
        <dbReference type="Rhea" id="RHEA:11108"/>
        <dbReference type="Rhea" id="RHEA-COMP:9827"/>
        <dbReference type="Rhea" id="RHEA-COMP:9828"/>
        <dbReference type="ChEBI" id="CHEBI:15378"/>
        <dbReference type="ChEBI" id="CHEBI:57652"/>
        <dbReference type="ChEBI" id="CHEBI:58339"/>
        <dbReference type="ChEBI" id="CHEBI:58343"/>
        <dbReference type="ChEBI" id="CHEBI:62065"/>
        <dbReference type="EC" id="2.8.2.17"/>
    </reaction>
    <physiologicalReaction direction="left-to-right" evidence="6">
        <dbReference type="Rhea" id="RHEA:11109"/>
    </physiologicalReaction>
</comment>
<comment type="catalytic activity">
    <reaction evidence="9">
        <text>3'-phosphoadenylyl sulfate + keratan = adenosine 3',5'-bisphosphate + keratan 6'-sulfate.</text>
        <dbReference type="EC" id="2.8.2.21"/>
    </reaction>
</comment>
<comment type="subcellular location">
    <subcellularLocation>
        <location evidence="1">Golgi apparatus membrane</location>
        <topology evidence="1">Single-pass type II membrane protein</topology>
    </subcellularLocation>
</comment>
<comment type="tissue specificity">
    <text evidence="9">Widely expressed in adult tissues. Expressed in heart, placenta, skeletal muscle and pancreas. Also expressed in various immune tissues such as spleen, lymph node, thymus and appendix.</text>
</comment>
<comment type="PTM">
    <text evidence="3">N-glycosylated.</text>
</comment>
<comment type="disease" evidence="6 8">
    <disease id="DI-01753">
        <name>Spondyloepiphyseal dysplasia with congenital joint dislocations</name>
        <acronym>SEDCJD</acronym>
        <description>A bone dysplasia clinically characterized by dislocation of the knees and/or hips at birth, clubfoot, elbow joint dysplasia with subluxation and limited extension, short stature, and progressive kyphosis developing in late childhood. The disorder is usually evident at birth, with short stature and multiple joint dislocations or subluxations that dominate the neonatal clinical and radiographic picture. During childhood, the dislocations improve, both spontaneously and with surgical treatment, and features of spondyloepiphyseal dysplasia become apparent, leading to arthritis of the hips and spine with intervertebral disk degeneration, rigid kyphoscoliosis, and trunk shortening by late childhood.</description>
        <dbReference type="MIM" id="143095"/>
    </disease>
    <text>The disease is caused by variants affecting the gene represented in this entry.</text>
</comment>
<comment type="similarity">
    <text evidence="12">Belongs to the sulfotransferase 1 family. Gal/GlcNAc/GalNAc subfamily.</text>
</comment>
<keyword id="KW-0119">Carbohydrate metabolism</keyword>
<keyword id="KW-0225">Disease variant</keyword>
<keyword id="KW-0325">Glycoprotein</keyword>
<keyword id="KW-0333">Golgi apparatus</keyword>
<keyword id="KW-0472">Membrane</keyword>
<keyword id="KW-1267">Proteomics identification</keyword>
<keyword id="KW-1185">Reference proteome</keyword>
<keyword id="KW-0735">Signal-anchor</keyword>
<keyword id="KW-0808">Transferase</keyword>
<keyword id="KW-0812">Transmembrane</keyword>
<keyword id="KW-1133">Transmembrane helix</keyword>
<accession>Q7LGC8</accession>
<accession>O75099</accession>
<accession>Q52M30</accession>
<protein>
    <recommendedName>
        <fullName evidence="13">Carbohydrate sulfotransferase 3</fullName>
        <ecNumber evidence="6 9 10">2.8.2.17</ecNumber>
        <ecNumber evidence="9">2.8.2.21</ecNumber>
    </recommendedName>
    <alternativeName>
        <fullName>Chondroitin 6-O-sulfotransferase 1</fullName>
        <shortName>C6ST-1</shortName>
    </alternativeName>
    <alternativeName>
        <fullName evidence="11">Chondroitin 6-sulfotransferase</fullName>
        <shortName evidence="11">C6ST</shortName>
    </alternativeName>
    <alternativeName>
        <fullName>Galactose/N-acetylglucosamine/N-acetylglucosamine 6-O-sulfotransferase 0</fullName>
        <shortName>GST-0</shortName>
    </alternativeName>
</protein>
<proteinExistence type="evidence at protein level"/>